<protein>
    <recommendedName>
        <fullName>Carboxypeptidase 1</fullName>
        <ecNumber evidence="2">3.4.17.19</ecNumber>
    </recommendedName>
    <alternativeName>
        <fullName>BsuCP</fullName>
    </alternativeName>
</protein>
<reference key="1">
    <citation type="journal article" date="1996" name="Microbiology">
        <title>Sequence analysis of the Bacillus subtilis chromosome region between the serA and kdg loci cloned in a yeast artificial chromosome.</title>
        <authorList>
            <person name="Sorokin A.V."/>
            <person name="Azevedo V."/>
            <person name="Zumstein E."/>
            <person name="Galleron N."/>
            <person name="Ehrlich S.D."/>
            <person name="Serror P."/>
        </authorList>
    </citation>
    <scope>NUCLEOTIDE SEQUENCE [GENOMIC DNA]</scope>
    <source>
        <strain>168 / Marburg / ATCC 6051 / DSM 10 / JCM 1465 / NBRC 13719 / NCIMB 3610 / NRRL NRS-744 / VKM B-501</strain>
    </source>
</reference>
<reference key="2">
    <citation type="journal article" date="1996" name="Microbiology">
        <title>Organization of the Bacillus subtilis 168 chromosome between kdg and the attachment site of the SP beta prophage: use of long accurate PCR and yeast artificial chromosomes for sequencing.</title>
        <authorList>
            <person name="Capuano V."/>
            <person name="Galleron N."/>
            <person name="Pujic P."/>
            <person name="Sorokin A."/>
            <person name="Ehrlich S.D."/>
        </authorList>
    </citation>
    <scope>NUCLEOTIDE SEQUENCE [GENOMIC DNA]</scope>
    <source>
        <strain>168 / Marburg / ATCC 6051 / DSM 10 / JCM 1465 / NBRC 13719 / NCIMB 3610 / NRRL NRS-744 / VKM B-501</strain>
    </source>
</reference>
<reference key="3">
    <citation type="journal article" date="1997" name="Nature">
        <title>The complete genome sequence of the Gram-positive bacterium Bacillus subtilis.</title>
        <authorList>
            <person name="Kunst F."/>
            <person name="Ogasawara N."/>
            <person name="Moszer I."/>
            <person name="Albertini A.M."/>
            <person name="Alloni G."/>
            <person name="Azevedo V."/>
            <person name="Bertero M.G."/>
            <person name="Bessieres P."/>
            <person name="Bolotin A."/>
            <person name="Borchert S."/>
            <person name="Borriss R."/>
            <person name="Boursier L."/>
            <person name="Brans A."/>
            <person name="Braun M."/>
            <person name="Brignell S.C."/>
            <person name="Bron S."/>
            <person name="Brouillet S."/>
            <person name="Bruschi C.V."/>
            <person name="Caldwell B."/>
            <person name="Capuano V."/>
            <person name="Carter N.M."/>
            <person name="Choi S.-K."/>
            <person name="Codani J.-J."/>
            <person name="Connerton I.F."/>
            <person name="Cummings N.J."/>
            <person name="Daniel R.A."/>
            <person name="Denizot F."/>
            <person name="Devine K.M."/>
            <person name="Duesterhoeft A."/>
            <person name="Ehrlich S.D."/>
            <person name="Emmerson P.T."/>
            <person name="Entian K.-D."/>
            <person name="Errington J."/>
            <person name="Fabret C."/>
            <person name="Ferrari E."/>
            <person name="Foulger D."/>
            <person name="Fritz C."/>
            <person name="Fujita M."/>
            <person name="Fujita Y."/>
            <person name="Fuma S."/>
            <person name="Galizzi A."/>
            <person name="Galleron N."/>
            <person name="Ghim S.-Y."/>
            <person name="Glaser P."/>
            <person name="Goffeau A."/>
            <person name="Golightly E.J."/>
            <person name="Grandi G."/>
            <person name="Guiseppi G."/>
            <person name="Guy B.J."/>
            <person name="Haga K."/>
            <person name="Haiech J."/>
            <person name="Harwood C.R."/>
            <person name="Henaut A."/>
            <person name="Hilbert H."/>
            <person name="Holsappel S."/>
            <person name="Hosono S."/>
            <person name="Hullo M.-F."/>
            <person name="Itaya M."/>
            <person name="Jones L.-M."/>
            <person name="Joris B."/>
            <person name="Karamata D."/>
            <person name="Kasahara Y."/>
            <person name="Klaerr-Blanchard M."/>
            <person name="Klein C."/>
            <person name="Kobayashi Y."/>
            <person name="Koetter P."/>
            <person name="Koningstein G."/>
            <person name="Krogh S."/>
            <person name="Kumano M."/>
            <person name="Kurita K."/>
            <person name="Lapidus A."/>
            <person name="Lardinois S."/>
            <person name="Lauber J."/>
            <person name="Lazarevic V."/>
            <person name="Lee S.-M."/>
            <person name="Levine A."/>
            <person name="Liu H."/>
            <person name="Masuda S."/>
            <person name="Mauel C."/>
            <person name="Medigue C."/>
            <person name="Medina N."/>
            <person name="Mellado R.P."/>
            <person name="Mizuno M."/>
            <person name="Moestl D."/>
            <person name="Nakai S."/>
            <person name="Noback M."/>
            <person name="Noone D."/>
            <person name="O'Reilly M."/>
            <person name="Ogawa K."/>
            <person name="Ogiwara A."/>
            <person name="Oudega B."/>
            <person name="Park S.-H."/>
            <person name="Parro V."/>
            <person name="Pohl T.M."/>
            <person name="Portetelle D."/>
            <person name="Porwollik S."/>
            <person name="Prescott A.M."/>
            <person name="Presecan E."/>
            <person name="Pujic P."/>
            <person name="Purnelle B."/>
            <person name="Rapoport G."/>
            <person name="Rey M."/>
            <person name="Reynolds S."/>
            <person name="Rieger M."/>
            <person name="Rivolta C."/>
            <person name="Rocha E."/>
            <person name="Roche B."/>
            <person name="Rose M."/>
            <person name="Sadaie Y."/>
            <person name="Sato T."/>
            <person name="Scanlan E."/>
            <person name="Schleich S."/>
            <person name="Schroeter R."/>
            <person name="Scoffone F."/>
            <person name="Sekiguchi J."/>
            <person name="Sekowska A."/>
            <person name="Seror S.J."/>
            <person name="Serror P."/>
            <person name="Shin B.-S."/>
            <person name="Soldo B."/>
            <person name="Sorokin A."/>
            <person name="Tacconi E."/>
            <person name="Takagi T."/>
            <person name="Takahashi H."/>
            <person name="Takemaru K."/>
            <person name="Takeuchi M."/>
            <person name="Tamakoshi A."/>
            <person name="Tanaka T."/>
            <person name="Terpstra P."/>
            <person name="Tognoni A."/>
            <person name="Tosato V."/>
            <person name="Uchiyama S."/>
            <person name="Vandenbol M."/>
            <person name="Vannier F."/>
            <person name="Vassarotti A."/>
            <person name="Viari A."/>
            <person name="Wambutt R."/>
            <person name="Wedler E."/>
            <person name="Wedler H."/>
            <person name="Weitzenegger T."/>
            <person name="Winters P."/>
            <person name="Wipat A."/>
            <person name="Yamamoto H."/>
            <person name="Yamane K."/>
            <person name="Yasumoto K."/>
            <person name="Yata K."/>
            <person name="Yoshida K."/>
            <person name="Yoshikawa H.-F."/>
            <person name="Zumstein E."/>
            <person name="Yoshikawa H."/>
            <person name="Danchin A."/>
        </authorList>
    </citation>
    <scope>NUCLEOTIDE SEQUENCE [LARGE SCALE GENOMIC DNA]</scope>
    <source>
        <strain>168</strain>
    </source>
</reference>
<reference key="4">
    <citation type="journal article" date="2009" name="Proteins">
        <title>Insight into the substrate length restriction of M32 carboxypeptidases: characterization of two distinct subfamilies.</title>
        <authorList>
            <person name="Lee M.M."/>
            <person name="Isaza C.E."/>
            <person name="White J.D."/>
            <person name="Chen R.P."/>
            <person name="Liang G.F."/>
            <person name="He H.T."/>
            <person name="Chan S.I."/>
            <person name="Chan M.K."/>
        </authorList>
    </citation>
    <scope>X-RAY CRYSTALLOGRAPHY (2.90 ANGSTROMS) IN COMPLEX WITH ZINC IONS</scope>
    <scope>CATALYTIC ACTIVITY</scope>
    <scope>FUNCTION</scope>
    <scope>COFACTOR</scope>
    <scope>SUBUNIT</scope>
    <source>
        <strain>168</strain>
    </source>
</reference>
<organism>
    <name type="scientific">Bacillus subtilis (strain 168)</name>
    <dbReference type="NCBI Taxonomy" id="224308"/>
    <lineage>
        <taxon>Bacteria</taxon>
        <taxon>Bacillati</taxon>
        <taxon>Bacillota</taxon>
        <taxon>Bacilli</taxon>
        <taxon>Bacillales</taxon>
        <taxon>Bacillaceae</taxon>
        <taxon>Bacillus</taxon>
    </lineage>
</organism>
<name>CBP1_BACSU</name>
<gene>
    <name type="primary">ypwA</name>
    <name type="ordered locus">BSU22080</name>
</gene>
<feature type="chain" id="PRO_0000078236" description="Carboxypeptidase 1">
    <location>
        <begin position="1"/>
        <end position="501"/>
    </location>
</feature>
<feature type="domain" description="Peptidase M32" evidence="1">
    <location>
        <begin position="3"/>
        <end position="496"/>
    </location>
</feature>
<feature type="short sequence motif" description="HPF" evidence="1">
    <location>
        <begin position="234"/>
        <end position="236"/>
    </location>
</feature>
<feature type="short sequence motif" description="DXRXT" evidence="1">
    <location>
        <begin position="244"/>
        <end position="248"/>
    </location>
</feature>
<feature type="short sequence motif" description="HEXXH" evidence="1">
    <location>
        <begin position="265"/>
        <end position="269"/>
    </location>
</feature>
<feature type="short sequence motif" description="HES/GQ" evidence="1">
    <location>
        <begin position="294"/>
        <end position="297"/>
    </location>
</feature>
<feature type="short sequence motif" description="I/NRXXA/SD" evidence="1">
    <location>
        <begin position="347"/>
        <end position="352"/>
    </location>
</feature>
<feature type="short sequence motif" description="GXXQDXHW" evidence="1">
    <location>
        <begin position="402"/>
        <end position="409"/>
    </location>
</feature>
<feature type="active site" description="Proton donor/acceptor" evidence="1">
    <location>
        <position position="266"/>
    </location>
</feature>
<feature type="binding site" evidence="2">
    <location>
        <position position="265"/>
    </location>
    <ligand>
        <name>Zn(2+)</name>
        <dbReference type="ChEBI" id="CHEBI:29105"/>
        <note>catalytic</note>
    </ligand>
</feature>
<feature type="binding site" evidence="2">
    <location>
        <position position="269"/>
    </location>
    <ligand>
        <name>Zn(2+)</name>
        <dbReference type="ChEBI" id="CHEBI:29105"/>
        <note>catalytic</note>
    </ligand>
</feature>
<feature type="binding site" evidence="2">
    <location>
        <position position="295"/>
    </location>
    <ligand>
        <name>Zn(2+)</name>
        <dbReference type="ChEBI" id="CHEBI:29105"/>
        <note>catalytic</note>
    </ligand>
</feature>
<feature type="helix" evidence="4">
    <location>
        <begin position="6"/>
        <end position="31"/>
    </location>
</feature>
<feature type="turn" evidence="4">
    <location>
        <begin position="32"/>
        <end position="34"/>
    </location>
</feature>
<feature type="helix" evidence="4">
    <location>
        <begin position="40"/>
        <end position="59"/>
    </location>
</feature>
<feature type="helix" evidence="4">
    <location>
        <begin position="61"/>
        <end position="72"/>
    </location>
</feature>
<feature type="helix" evidence="4">
    <location>
        <begin position="74"/>
        <end position="76"/>
    </location>
</feature>
<feature type="helix" evidence="4">
    <location>
        <begin position="79"/>
        <end position="95"/>
    </location>
</feature>
<feature type="helix" evidence="4">
    <location>
        <begin position="100"/>
        <end position="122"/>
    </location>
</feature>
<feature type="helix" evidence="4">
    <location>
        <begin position="126"/>
        <end position="147"/>
    </location>
</feature>
<feature type="helix" evidence="4">
    <location>
        <begin position="155"/>
        <end position="161"/>
    </location>
</feature>
<feature type="helix" evidence="4">
    <location>
        <begin position="167"/>
        <end position="189"/>
    </location>
</feature>
<feature type="turn" evidence="4">
    <location>
        <begin position="198"/>
        <end position="200"/>
    </location>
</feature>
<feature type="helix" evidence="4">
    <location>
        <begin position="206"/>
        <end position="219"/>
    </location>
</feature>
<feature type="strand" evidence="4">
    <location>
        <begin position="229"/>
        <end position="231"/>
    </location>
</feature>
<feature type="strand" evidence="4">
    <location>
        <begin position="237"/>
        <end position="241"/>
    </location>
</feature>
<feature type="strand" evidence="4">
    <location>
        <begin position="244"/>
        <end position="249"/>
    </location>
</feature>
<feature type="helix" evidence="4">
    <location>
        <begin position="257"/>
        <end position="273"/>
    </location>
</feature>
<feature type="helix" evidence="4">
    <location>
        <begin position="278"/>
        <end position="280"/>
    </location>
</feature>
<feature type="strand" evidence="4">
    <location>
        <begin position="283"/>
        <end position="287"/>
    </location>
</feature>
<feature type="helix" evidence="4">
    <location>
        <begin position="291"/>
        <end position="302"/>
    </location>
</feature>
<feature type="turn" evidence="4">
    <location>
        <begin position="303"/>
        <end position="307"/>
    </location>
</feature>
<feature type="helix" evidence="4">
    <location>
        <begin position="309"/>
        <end position="312"/>
    </location>
</feature>
<feature type="turn" evidence="4">
    <location>
        <begin position="313"/>
        <end position="315"/>
    </location>
</feature>
<feature type="helix" evidence="4">
    <location>
        <begin position="316"/>
        <end position="322"/>
    </location>
</feature>
<feature type="turn" evidence="4">
    <location>
        <begin position="324"/>
        <end position="329"/>
    </location>
</feature>
<feature type="helix" evidence="4">
    <location>
        <begin position="332"/>
        <end position="339"/>
    </location>
</feature>
<feature type="helix" evidence="4">
    <location>
        <begin position="348"/>
        <end position="350"/>
    </location>
</feature>
<feature type="turn" evidence="4">
    <location>
        <begin position="353"/>
        <end position="355"/>
    </location>
</feature>
<feature type="helix" evidence="4">
    <location>
        <begin position="356"/>
        <end position="371"/>
    </location>
</feature>
<feature type="helix" evidence="4">
    <location>
        <begin position="377"/>
        <end position="379"/>
    </location>
</feature>
<feature type="helix" evidence="4">
    <location>
        <begin position="380"/>
        <end position="392"/>
    </location>
</feature>
<feature type="turn" evidence="4">
    <location>
        <begin position="399"/>
        <end position="404"/>
    </location>
</feature>
<feature type="turn" evidence="4">
    <location>
        <begin position="408"/>
        <end position="412"/>
    </location>
</feature>
<feature type="helix" evidence="4">
    <location>
        <begin position="418"/>
        <end position="437"/>
    </location>
</feature>
<feature type="helix" evidence="4">
    <location>
        <begin position="441"/>
        <end position="447"/>
    </location>
</feature>
<feature type="helix" evidence="4">
    <location>
        <begin position="451"/>
        <end position="460"/>
    </location>
</feature>
<feature type="turn" evidence="4">
    <location>
        <begin position="461"/>
        <end position="466"/>
    </location>
</feature>
<feature type="helix" evidence="4">
    <location>
        <begin position="470"/>
        <end position="478"/>
    </location>
</feature>
<feature type="strand" evidence="4">
    <location>
        <begin position="479"/>
        <end position="481"/>
    </location>
</feature>
<feature type="helix" evidence="4">
    <location>
        <begin position="484"/>
        <end position="498"/>
    </location>
</feature>
<proteinExistence type="evidence at protein level"/>
<accession>P50848</accession>
<evidence type="ECO:0000255" key="1">
    <source>
        <dbReference type="PROSITE-ProRule" id="PRU01378"/>
    </source>
</evidence>
<evidence type="ECO:0000269" key="2">
    <source>
    </source>
</evidence>
<evidence type="ECO:0000305" key="3"/>
<evidence type="ECO:0007829" key="4">
    <source>
        <dbReference type="PDB" id="3HQ2"/>
    </source>
</evidence>
<dbReference type="EC" id="3.4.17.19" evidence="2"/>
<dbReference type="EMBL" id="L47838">
    <property type="protein sequence ID" value="AAB38482.1"/>
    <property type="molecule type" value="Genomic_DNA"/>
</dbReference>
<dbReference type="EMBL" id="L77246">
    <property type="protein sequence ID" value="AAA96610.1"/>
    <property type="molecule type" value="Genomic_DNA"/>
</dbReference>
<dbReference type="EMBL" id="AL009126">
    <property type="protein sequence ID" value="CAB14125.1"/>
    <property type="molecule type" value="Genomic_DNA"/>
</dbReference>
<dbReference type="PIR" id="D69943">
    <property type="entry name" value="D69943"/>
</dbReference>
<dbReference type="RefSeq" id="NP_390090.1">
    <property type="nucleotide sequence ID" value="NC_000964.3"/>
</dbReference>
<dbReference type="RefSeq" id="WP_004398513.1">
    <property type="nucleotide sequence ID" value="NZ_OZ025638.1"/>
</dbReference>
<dbReference type="PDB" id="3HQ2">
    <property type="method" value="X-ray"/>
    <property type="resolution" value="2.90 A"/>
    <property type="chains" value="A/B=1-501"/>
</dbReference>
<dbReference type="PDBsum" id="3HQ2"/>
<dbReference type="SMR" id="P50848"/>
<dbReference type="FunCoup" id="P50848">
    <property type="interactions" value="5"/>
</dbReference>
<dbReference type="STRING" id="224308.BSU22080"/>
<dbReference type="MEROPS" id="M32.006"/>
<dbReference type="jPOST" id="P50848"/>
<dbReference type="PaxDb" id="224308-BSU22080"/>
<dbReference type="EnsemblBacteria" id="CAB14125">
    <property type="protein sequence ID" value="CAB14125"/>
    <property type="gene ID" value="BSU_22080"/>
</dbReference>
<dbReference type="GeneID" id="939061"/>
<dbReference type="KEGG" id="bsu:BSU22080"/>
<dbReference type="PATRIC" id="fig|224308.179.peg.2412"/>
<dbReference type="eggNOG" id="COG2317">
    <property type="taxonomic scope" value="Bacteria"/>
</dbReference>
<dbReference type="InParanoid" id="P50848"/>
<dbReference type="OrthoDB" id="9772308at2"/>
<dbReference type="PhylomeDB" id="P50848"/>
<dbReference type="BioCyc" id="BSUB:BSU22080-MONOMER"/>
<dbReference type="EvolutionaryTrace" id="P50848"/>
<dbReference type="Proteomes" id="UP000001570">
    <property type="component" value="Chromosome"/>
</dbReference>
<dbReference type="GO" id="GO:0004181">
    <property type="term" value="F:metallocarboxypeptidase activity"/>
    <property type="evidence" value="ECO:0000314"/>
    <property type="project" value="UniProtKB"/>
</dbReference>
<dbReference type="GO" id="GO:0008270">
    <property type="term" value="F:zinc ion binding"/>
    <property type="evidence" value="ECO:0000314"/>
    <property type="project" value="UniProtKB"/>
</dbReference>
<dbReference type="GO" id="GO:0006508">
    <property type="term" value="P:proteolysis"/>
    <property type="evidence" value="ECO:0000314"/>
    <property type="project" value="UniProtKB"/>
</dbReference>
<dbReference type="CDD" id="cd06460">
    <property type="entry name" value="M32_Taq"/>
    <property type="match status" value="1"/>
</dbReference>
<dbReference type="FunFam" id="1.10.1370.30:FF:000003">
    <property type="entry name" value="Thermostable carboxypeptidase 1"/>
    <property type="match status" value="1"/>
</dbReference>
<dbReference type="Gene3D" id="1.10.1370.30">
    <property type="match status" value="1"/>
</dbReference>
<dbReference type="InterPro" id="IPR001333">
    <property type="entry name" value="Peptidase_M32_Taq"/>
</dbReference>
<dbReference type="PANTHER" id="PTHR34217:SF1">
    <property type="entry name" value="CARBOXYPEPTIDASE 1"/>
    <property type="match status" value="1"/>
</dbReference>
<dbReference type="PANTHER" id="PTHR34217">
    <property type="entry name" value="METAL-DEPENDENT CARBOXYPEPTIDASE"/>
    <property type="match status" value="1"/>
</dbReference>
<dbReference type="Pfam" id="PF02074">
    <property type="entry name" value="Peptidase_M32"/>
    <property type="match status" value="1"/>
</dbReference>
<dbReference type="PIRSF" id="PIRSF006615">
    <property type="entry name" value="Zn_crbxpep_Taq"/>
    <property type="match status" value="1"/>
</dbReference>
<dbReference type="PRINTS" id="PR00998">
    <property type="entry name" value="CRBOXYPTASET"/>
</dbReference>
<dbReference type="SUPFAM" id="SSF55486">
    <property type="entry name" value="Metalloproteases ('zincins'), catalytic domain"/>
    <property type="match status" value="1"/>
</dbReference>
<dbReference type="PROSITE" id="PS52034">
    <property type="entry name" value="PEPTIDASE_M32"/>
    <property type="match status" value="1"/>
</dbReference>
<keyword id="KW-0002">3D-structure</keyword>
<keyword id="KW-0121">Carboxypeptidase</keyword>
<keyword id="KW-0378">Hydrolase</keyword>
<keyword id="KW-0479">Metal-binding</keyword>
<keyword id="KW-0482">Metalloprotease</keyword>
<keyword id="KW-0645">Protease</keyword>
<keyword id="KW-1185">Reference proteome</keyword>
<keyword id="KW-0862">Zinc</keyword>
<sequence length="501" mass="58175">MEIHTYEKEFFDLLKRISHYSEAVALMHWDSRTGAPKNGSEDRAESIGQLSTDIFNIQTSDRMKELIDVLYERFDDLSEDTKKAVELAKKEYEENKKIPEAEYKEYVILCSKAETAWEEAKGKSDFSLFSPYLEQLIEFNKRFITYWGYQEHPYDALLDLFEPGVTVKVLDQLFAELKEAIIPLVKQVTASGNKPDTSFITKAFPKEKQKELSLYFLQELGYDFDGGRLDETVHPFATTLNRGDVRVTTRYDEKDFRTAIFGTIHECGHAIYEQNIDEALSGTNLSDGASMGIHESQSLFYENFIGRNKHFWTPYYKKIQEASPVQFKDISLDDFVRAINESKPSFIRVEADELTYPLHIIIRYEIEKAIFSNEVSVEDLPSLWNQKYQDYLGITPQTDAEGILQDVHWAGGDFGYFPSYALGYMYAAQLKQKMLEDLPEFDALLERGEFHPIKQWLTEKVHIHGKRKKPLDIIKDATGEELNVRYLIDYLSNKYSNLYLL</sequence>
<comment type="function">
    <text evidence="2">Broad specificity carboxypetidase that releases amino acids sequentially from the C-terminus, including neutral, aromatic, polar and basic residues. Has lower activity with substrates ending with His or Trp.</text>
</comment>
<comment type="catalytic activity">
    <reaction evidence="1 2">
        <text>Release of a C-terminal amino acid with broad specificity, except for -Pro.</text>
        <dbReference type="EC" id="3.4.17.19"/>
    </reaction>
</comment>
<comment type="cofactor">
    <cofactor evidence="2">
        <name>Zn(2+)</name>
        <dbReference type="ChEBI" id="CHEBI:29105"/>
    </cofactor>
    <text evidence="2">Binds 1 zinc ion per subunit.</text>
</comment>
<comment type="subunit">
    <text evidence="2">Homodimer.</text>
</comment>
<comment type="similarity">
    <text evidence="1 3">Belongs to the peptidase M32 family.</text>
</comment>